<name>COQ7_MARMS</name>
<proteinExistence type="inferred from homology"/>
<gene>
    <name evidence="1" type="primary">coq7</name>
    <name type="ordered locus">Mmwyl1_2992</name>
</gene>
<protein>
    <recommendedName>
        <fullName evidence="1">3-demethoxyubiquinol 3-hydroxylase</fullName>
        <shortName evidence="1">DMQ hydroxylase</shortName>
        <ecNumber evidence="1">1.14.99.60</ecNumber>
    </recommendedName>
    <alternativeName>
        <fullName evidence="1">2-nonaprenyl-3-methyl-6-methoxy-1,4-benzoquinol hydroxylase</fullName>
    </alternativeName>
</protein>
<organism>
    <name type="scientific">Marinomonas sp. (strain MWYL1)</name>
    <dbReference type="NCBI Taxonomy" id="400668"/>
    <lineage>
        <taxon>Bacteria</taxon>
        <taxon>Pseudomonadati</taxon>
        <taxon>Pseudomonadota</taxon>
        <taxon>Gammaproteobacteria</taxon>
        <taxon>Oceanospirillales</taxon>
        <taxon>Oceanospirillaceae</taxon>
        <taxon>Marinomonas</taxon>
    </lineage>
</organism>
<accession>A6VZM4</accession>
<dbReference type="EC" id="1.14.99.60" evidence="1"/>
<dbReference type="EMBL" id="CP000749">
    <property type="protein sequence ID" value="ABR71903.1"/>
    <property type="molecule type" value="Genomic_DNA"/>
</dbReference>
<dbReference type="SMR" id="A6VZM4"/>
<dbReference type="STRING" id="400668.Mmwyl1_2992"/>
<dbReference type="KEGG" id="mmw:Mmwyl1_2992"/>
<dbReference type="eggNOG" id="COG2941">
    <property type="taxonomic scope" value="Bacteria"/>
</dbReference>
<dbReference type="HOGENOM" id="CLU_088601_0_0_6"/>
<dbReference type="OrthoDB" id="5192789at2"/>
<dbReference type="UniPathway" id="UPA00232"/>
<dbReference type="GO" id="GO:0005886">
    <property type="term" value="C:plasma membrane"/>
    <property type="evidence" value="ECO:0007669"/>
    <property type="project" value="UniProtKB-SubCell"/>
</dbReference>
<dbReference type="GO" id="GO:0008682">
    <property type="term" value="F:3-demethoxyubiquinol 3-hydroxylase activity"/>
    <property type="evidence" value="ECO:0007669"/>
    <property type="project" value="UniProtKB-EC"/>
</dbReference>
<dbReference type="GO" id="GO:0046872">
    <property type="term" value="F:metal ion binding"/>
    <property type="evidence" value="ECO:0007669"/>
    <property type="project" value="UniProtKB-KW"/>
</dbReference>
<dbReference type="GO" id="GO:0006744">
    <property type="term" value="P:ubiquinone biosynthetic process"/>
    <property type="evidence" value="ECO:0007669"/>
    <property type="project" value="UniProtKB-UniRule"/>
</dbReference>
<dbReference type="CDD" id="cd01042">
    <property type="entry name" value="DMQH"/>
    <property type="match status" value="1"/>
</dbReference>
<dbReference type="Gene3D" id="1.20.1260.10">
    <property type="match status" value="1"/>
</dbReference>
<dbReference type="HAMAP" id="MF_01658">
    <property type="entry name" value="COQ7"/>
    <property type="match status" value="1"/>
</dbReference>
<dbReference type="InterPro" id="IPR047809">
    <property type="entry name" value="COQ7_proteobact"/>
</dbReference>
<dbReference type="InterPro" id="IPR012347">
    <property type="entry name" value="Ferritin-like"/>
</dbReference>
<dbReference type="InterPro" id="IPR009078">
    <property type="entry name" value="Ferritin-like_SF"/>
</dbReference>
<dbReference type="InterPro" id="IPR011566">
    <property type="entry name" value="Ubq_synth_Coq7"/>
</dbReference>
<dbReference type="NCBIfam" id="NF033656">
    <property type="entry name" value="DMQ_monoox_COQ7"/>
    <property type="match status" value="1"/>
</dbReference>
<dbReference type="PANTHER" id="PTHR11237:SF4">
    <property type="entry name" value="5-DEMETHOXYUBIQUINONE HYDROXYLASE, MITOCHONDRIAL"/>
    <property type="match status" value="1"/>
</dbReference>
<dbReference type="PANTHER" id="PTHR11237">
    <property type="entry name" value="COENZYME Q10 BIOSYNTHESIS PROTEIN 7"/>
    <property type="match status" value="1"/>
</dbReference>
<dbReference type="Pfam" id="PF03232">
    <property type="entry name" value="COQ7"/>
    <property type="match status" value="1"/>
</dbReference>
<dbReference type="SUPFAM" id="SSF47240">
    <property type="entry name" value="Ferritin-like"/>
    <property type="match status" value="1"/>
</dbReference>
<evidence type="ECO:0000255" key="1">
    <source>
        <dbReference type="HAMAP-Rule" id="MF_01658"/>
    </source>
</evidence>
<feature type="chain" id="PRO_0000338698" description="3-demethoxyubiquinol 3-hydroxylase">
    <location>
        <begin position="1"/>
        <end position="210"/>
    </location>
</feature>
<feature type="binding site" evidence="1">
    <location>
        <position position="59"/>
    </location>
    <ligand>
        <name>Fe cation</name>
        <dbReference type="ChEBI" id="CHEBI:24875"/>
        <label>1</label>
    </ligand>
</feature>
<feature type="binding site" evidence="1">
    <location>
        <position position="89"/>
    </location>
    <ligand>
        <name>Fe cation</name>
        <dbReference type="ChEBI" id="CHEBI:24875"/>
        <label>1</label>
    </ligand>
</feature>
<feature type="binding site" evidence="1">
    <location>
        <position position="89"/>
    </location>
    <ligand>
        <name>Fe cation</name>
        <dbReference type="ChEBI" id="CHEBI:24875"/>
        <label>2</label>
    </ligand>
</feature>
<feature type="binding site" evidence="1">
    <location>
        <position position="92"/>
    </location>
    <ligand>
        <name>Fe cation</name>
        <dbReference type="ChEBI" id="CHEBI:24875"/>
        <label>1</label>
    </ligand>
</feature>
<feature type="binding site" evidence="1">
    <location>
        <position position="141"/>
    </location>
    <ligand>
        <name>Fe cation</name>
        <dbReference type="ChEBI" id="CHEBI:24875"/>
        <label>2</label>
    </ligand>
</feature>
<feature type="binding site" evidence="1">
    <location>
        <position position="173"/>
    </location>
    <ligand>
        <name>Fe cation</name>
        <dbReference type="ChEBI" id="CHEBI:24875"/>
        <label>1</label>
    </ligand>
</feature>
<feature type="binding site" evidence="1">
    <location>
        <position position="173"/>
    </location>
    <ligand>
        <name>Fe cation</name>
        <dbReference type="ChEBI" id="CHEBI:24875"/>
        <label>2</label>
    </ligand>
</feature>
<feature type="binding site" evidence="1">
    <location>
        <position position="176"/>
    </location>
    <ligand>
        <name>Fe cation</name>
        <dbReference type="ChEBI" id="CHEBI:24875"/>
        <label>2</label>
    </ligand>
</feature>
<comment type="function">
    <text evidence="1">Catalyzes the hydroxylation of 2-nonaprenyl-3-methyl-6-methoxy-1,4-benzoquinol during ubiquinone biosynthesis.</text>
</comment>
<comment type="catalytic activity">
    <reaction evidence="1">
        <text>a 5-methoxy-2-methyl-3-(all-trans-polyprenyl)benzene-1,4-diol + AH2 + O2 = a 3-demethylubiquinol + A + H2O</text>
        <dbReference type="Rhea" id="RHEA:50908"/>
        <dbReference type="Rhea" id="RHEA-COMP:10859"/>
        <dbReference type="Rhea" id="RHEA-COMP:10914"/>
        <dbReference type="ChEBI" id="CHEBI:13193"/>
        <dbReference type="ChEBI" id="CHEBI:15377"/>
        <dbReference type="ChEBI" id="CHEBI:15379"/>
        <dbReference type="ChEBI" id="CHEBI:17499"/>
        <dbReference type="ChEBI" id="CHEBI:84167"/>
        <dbReference type="ChEBI" id="CHEBI:84422"/>
        <dbReference type="EC" id="1.14.99.60"/>
    </reaction>
</comment>
<comment type="cofactor">
    <cofactor evidence="1">
        <name>Fe cation</name>
        <dbReference type="ChEBI" id="CHEBI:24875"/>
    </cofactor>
    <text evidence="1">Binds 2 iron ions per subunit.</text>
</comment>
<comment type="pathway">
    <text evidence="1">Cofactor biosynthesis; ubiquinone biosynthesis.</text>
</comment>
<comment type="subcellular location">
    <subcellularLocation>
        <location evidence="1">Cell membrane</location>
        <topology evidence="1">Peripheral membrane protein</topology>
    </subcellularLocation>
</comment>
<comment type="similarity">
    <text evidence="1">Belongs to the COQ7 family.</text>
</comment>
<keyword id="KW-1003">Cell membrane</keyword>
<keyword id="KW-0408">Iron</keyword>
<keyword id="KW-0472">Membrane</keyword>
<keyword id="KW-0479">Metal-binding</keyword>
<keyword id="KW-0503">Monooxygenase</keyword>
<keyword id="KW-0560">Oxidoreductase</keyword>
<keyword id="KW-0831">Ubiquinone biosynthesis</keyword>
<sequence length="210" mass="23085">MISFLDKAVLQFDRALQTLVPHAAKATRPSPANTLEEAELDQVERKHSSGLMRINHTGEVCAQALYAGQATTAKLATVRQEMEHAADEEIDHLVWCEQRLYDLGSKPSILNPLFYGASFMIGAGAGFISDKLSLGFVAATEDQVCIHLQKHMAALPMQDAKSKAVLTQMHIDEAKHKAMALEAGGYEFPQPIMAIMTQVSKVMTITTYRI</sequence>
<reference key="1">
    <citation type="submission" date="2007-06" db="EMBL/GenBank/DDBJ databases">
        <title>Complete sequence of Marinomonas sp. MWYL1.</title>
        <authorList>
            <consortium name="US DOE Joint Genome Institute"/>
            <person name="Copeland A."/>
            <person name="Lucas S."/>
            <person name="Lapidus A."/>
            <person name="Barry K."/>
            <person name="Glavina del Rio T."/>
            <person name="Dalin E."/>
            <person name="Tice H."/>
            <person name="Pitluck S."/>
            <person name="Kiss H."/>
            <person name="Brettin T."/>
            <person name="Bruce D."/>
            <person name="Detter J.C."/>
            <person name="Han C."/>
            <person name="Schmutz J."/>
            <person name="Larimer F."/>
            <person name="Land M."/>
            <person name="Hauser L."/>
            <person name="Kyrpides N."/>
            <person name="Kim E."/>
            <person name="Johnston A.W.B."/>
            <person name="Todd J.D."/>
            <person name="Rogers R."/>
            <person name="Wexler M."/>
            <person name="Bond P.L."/>
            <person name="Li Y."/>
            <person name="Richardson P."/>
        </authorList>
    </citation>
    <scope>NUCLEOTIDE SEQUENCE [LARGE SCALE GENOMIC DNA]</scope>
    <source>
        <strain>MWYL1</strain>
    </source>
</reference>